<feature type="chain" id="PRO_1000050287" description="4-hydroxy-tetrahydrodipicolinate synthase">
    <location>
        <begin position="1"/>
        <end position="302"/>
    </location>
</feature>
<feature type="active site" description="Proton donor/acceptor" evidence="1">
    <location>
        <position position="144"/>
    </location>
</feature>
<feature type="active site" description="Schiff-base intermediate with substrate" evidence="1">
    <location>
        <position position="172"/>
    </location>
</feature>
<feature type="binding site" evidence="1">
    <location>
        <position position="55"/>
    </location>
    <ligand>
        <name>pyruvate</name>
        <dbReference type="ChEBI" id="CHEBI:15361"/>
    </ligand>
</feature>
<feature type="binding site" evidence="1">
    <location>
        <position position="214"/>
    </location>
    <ligand>
        <name>pyruvate</name>
        <dbReference type="ChEBI" id="CHEBI:15361"/>
    </ligand>
</feature>
<feature type="site" description="Part of a proton relay during catalysis" evidence="1">
    <location>
        <position position="54"/>
    </location>
</feature>
<feature type="site" description="Part of a proton relay during catalysis" evidence="1">
    <location>
        <position position="117"/>
    </location>
</feature>
<organism>
    <name type="scientific">Synechococcus sp. (strain WH7803)</name>
    <dbReference type="NCBI Taxonomy" id="32051"/>
    <lineage>
        <taxon>Bacteria</taxon>
        <taxon>Bacillati</taxon>
        <taxon>Cyanobacteriota</taxon>
        <taxon>Cyanophyceae</taxon>
        <taxon>Synechococcales</taxon>
        <taxon>Synechococcaceae</taxon>
        <taxon>Synechococcus</taxon>
    </lineage>
</organism>
<protein>
    <recommendedName>
        <fullName evidence="1">4-hydroxy-tetrahydrodipicolinate synthase</fullName>
        <shortName evidence="1">HTPA synthase</shortName>
        <ecNumber evidence="1">4.3.3.7</ecNumber>
    </recommendedName>
</protein>
<keyword id="KW-0028">Amino-acid biosynthesis</keyword>
<keyword id="KW-0963">Cytoplasm</keyword>
<keyword id="KW-0220">Diaminopimelate biosynthesis</keyword>
<keyword id="KW-0456">Lyase</keyword>
<keyword id="KW-0457">Lysine biosynthesis</keyword>
<keyword id="KW-1185">Reference proteome</keyword>
<keyword id="KW-0704">Schiff base</keyword>
<reference key="1">
    <citation type="submission" date="2006-05" db="EMBL/GenBank/DDBJ databases">
        <authorList>
            <consortium name="Genoscope"/>
        </authorList>
    </citation>
    <scope>NUCLEOTIDE SEQUENCE [LARGE SCALE GENOMIC DNA]</scope>
    <source>
        <strain>WH7803</strain>
    </source>
</reference>
<dbReference type="EC" id="4.3.3.7" evidence="1"/>
<dbReference type="EMBL" id="CT971583">
    <property type="protein sequence ID" value="CAK22499.1"/>
    <property type="molecule type" value="Genomic_DNA"/>
</dbReference>
<dbReference type="SMR" id="A5GHT4"/>
<dbReference type="STRING" id="32051.SynWH7803_0073"/>
<dbReference type="KEGG" id="syx:SynWH7803_0073"/>
<dbReference type="eggNOG" id="COG0329">
    <property type="taxonomic scope" value="Bacteria"/>
</dbReference>
<dbReference type="HOGENOM" id="CLU_049343_7_1_3"/>
<dbReference type="OrthoDB" id="9782828at2"/>
<dbReference type="UniPathway" id="UPA00034">
    <property type="reaction ID" value="UER00017"/>
</dbReference>
<dbReference type="Proteomes" id="UP000001566">
    <property type="component" value="Chromosome"/>
</dbReference>
<dbReference type="GO" id="GO:0005829">
    <property type="term" value="C:cytosol"/>
    <property type="evidence" value="ECO:0007669"/>
    <property type="project" value="TreeGrafter"/>
</dbReference>
<dbReference type="GO" id="GO:0008840">
    <property type="term" value="F:4-hydroxy-tetrahydrodipicolinate synthase activity"/>
    <property type="evidence" value="ECO:0007669"/>
    <property type="project" value="UniProtKB-UniRule"/>
</dbReference>
<dbReference type="GO" id="GO:0019877">
    <property type="term" value="P:diaminopimelate biosynthetic process"/>
    <property type="evidence" value="ECO:0007669"/>
    <property type="project" value="UniProtKB-UniRule"/>
</dbReference>
<dbReference type="GO" id="GO:0009089">
    <property type="term" value="P:lysine biosynthetic process via diaminopimelate"/>
    <property type="evidence" value="ECO:0007669"/>
    <property type="project" value="UniProtKB-UniRule"/>
</dbReference>
<dbReference type="CDD" id="cd00950">
    <property type="entry name" value="DHDPS"/>
    <property type="match status" value="1"/>
</dbReference>
<dbReference type="Gene3D" id="3.20.20.70">
    <property type="entry name" value="Aldolase class I"/>
    <property type="match status" value="1"/>
</dbReference>
<dbReference type="HAMAP" id="MF_00418">
    <property type="entry name" value="DapA"/>
    <property type="match status" value="1"/>
</dbReference>
<dbReference type="InterPro" id="IPR013785">
    <property type="entry name" value="Aldolase_TIM"/>
</dbReference>
<dbReference type="InterPro" id="IPR005263">
    <property type="entry name" value="DapA"/>
</dbReference>
<dbReference type="InterPro" id="IPR002220">
    <property type="entry name" value="DapA-like"/>
</dbReference>
<dbReference type="InterPro" id="IPR020625">
    <property type="entry name" value="Schiff_base-form_aldolases_AS"/>
</dbReference>
<dbReference type="InterPro" id="IPR020624">
    <property type="entry name" value="Schiff_base-form_aldolases_CS"/>
</dbReference>
<dbReference type="NCBIfam" id="TIGR00674">
    <property type="entry name" value="dapA"/>
    <property type="match status" value="1"/>
</dbReference>
<dbReference type="PANTHER" id="PTHR12128:SF66">
    <property type="entry name" value="4-HYDROXY-2-OXOGLUTARATE ALDOLASE, MITOCHONDRIAL"/>
    <property type="match status" value="1"/>
</dbReference>
<dbReference type="PANTHER" id="PTHR12128">
    <property type="entry name" value="DIHYDRODIPICOLINATE SYNTHASE"/>
    <property type="match status" value="1"/>
</dbReference>
<dbReference type="Pfam" id="PF00701">
    <property type="entry name" value="DHDPS"/>
    <property type="match status" value="1"/>
</dbReference>
<dbReference type="PIRSF" id="PIRSF001365">
    <property type="entry name" value="DHDPS"/>
    <property type="match status" value="1"/>
</dbReference>
<dbReference type="PRINTS" id="PR00146">
    <property type="entry name" value="DHPICSNTHASE"/>
</dbReference>
<dbReference type="SMART" id="SM01130">
    <property type="entry name" value="DHDPS"/>
    <property type="match status" value="1"/>
</dbReference>
<dbReference type="SUPFAM" id="SSF51569">
    <property type="entry name" value="Aldolase"/>
    <property type="match status" value="1"/>
</dbReference>
<dbReference type="PROSITE" id="PS00665">
    <property type="entry name" value="DHDPS_1"/>
    <property type="match status" value="1"/>
</dbReference>
<dbReference type="PROSITE" id="PS00666">
    <property type="entry name" value="DHDPS_2"/>
    <property type="match status" value="1"/>
</dbReference>
<comment type="function">
    <text evidence="1">Catalyzes the condensation of (S)-aspartate-beta-semialdehyde [(S)-ASA] and pyruvate to 4-hydroxy-tetrahydrodipicolinate (HTPA).</text>
</comment>
<comment type="catalytic activity">
    <reaction evidence="1">
        <text>L-aspartate 4-semialdehyde + pyruvate = (2S,4S)-4-hydroxy-2,3,4,5-tetrahydrodipicolinate + H2O + H(+)</text>
        <dbReference type="Rhea" id="RHEA:34171"/>
        <dbReference type="ChEBI" id="CHEBI:15361"/>
        <dbReference type="ChEBI" id="CHEBI:15377"/>
        <dbReference type="ChEBI" id="CHEBI:15378"/>
        <dbReference type="ChEBI" id="CHEBI:67139"/>
        <dbReference type="ChEBI" id="CHEBI:537519"/>
        <dbReference type="EC" id="4.3.3.7"/>
    </reaction>
</comment>
<comment type="pathway">
    <text evidence="1">Amino-acid biosynthesis; L-lysine biosynthesis via DAP pathway; (S)-tetrahydrodipicolinate from L-aspartate: step 3/4.</text>
</comment>
<comment type="subunit">
    <text evidence="1">Homotetramer; dimer of dimers.</text>
</comment>
<comment type="subcellular location">
    <subcellularLocation>
        <location evidence="1">Cytoplasm</location>
    </subcellularLocation>
</comment>
<comment type="similarity">
    <text evidence="1">Belongs to the DapA family.</text>
</comment>
<comment type="caution">
    <text evidence="2">Was originally thought to be a dihydrodipicolinate synthase (DHDPS), catalyzing the condensation of (S)-aspartate-beta-semialdehyde [(S)-ASA] and pyruvate to dihydrodipicolinate (DHDP). However, it was shown in E.coli that the product of the enzymatic reaction is not dihydrodipicolinate but in fact (4S)-4-hydroxy-2,3,4,5-tetrahydro-(2S)-dipicolinic acid (HTPA), and that the consecutive dehydration reaction leading to DHDP is not spontaneous but catalyzed by DapB.</text>
</comment>
<evidence type="ECO:0000255" key="1">
    <source>
        <dbReference type="HAMAP-Rule" id="MF_00418"/>
    </source>
</evidence>
<evidence type="ECO:0000305" key="2"/>
<proteinExistence type="inferred from homology"/>
<name>DAPA_SYNPW</name>
<accession>A5GHT4</accession>
<gene>
    <name evidence="1" type="primary">dapA</name>
    <name type="ordered locus">SynWH7803_0073</name>
</gene>
<sequence>MSPAAELSPTPFGRLLTAMVTPFDAEGAVDLALAGRLARHLVDEGSDGLVVCGTTGESPTLSWDEQSQLLEAVRQAVGPGVPVLAGTGSNCTQEAVKATREAAAAGADGALVVTPYYNKPPQEGLEAHFRAIAEAAPELPLMLYNIPGRTGCSMEPATVARLMDCSNIVSFKAASGTTEEVTALRLACGAKLAIYSGDDGLVLPMLSVGAVGVVSVASHLVGRRMRAMVEAYLSGQPAVALGHHEQLIPLFKALFATTNPIPVKAALELSGWPVGSPRSPLLPLDPAMRAALSDTLAALRPT</sequence>